<organism>
    <name type="scientific">Danio rerio</name>
    <name type="common">Zebrafish</name>
    <name type="synonym">Brachydanio rerio</name>
    <dbReference type="NCBI Taxonomy" id="7955"/>
    <lineage>
        <taxon>Eukaryota</taxon>
        <taxon>Metazoa</taxon>
        <taxon>Chordata</taxon>
        <taxon>Craniata</taxon>
        <taxon>Vertebrata</taxon>
        <taxon>Euteleostomi</taxon>
        <taxon>Actinopterygii</taxon>
        <taxon>Neopterygii</taxon>
        <taxon>Teleostei</taxon>
        <taxon>Ostariophysi</taxon>
        <taxon>Cypriniformes</taxon>
        <taxon>Danionidae</taxon>
        <taxon>Danioninae</taxon>
        <taxon>Danio</taxon>
    </lineage>
</organism>
<protein>
    <recommendedName>
        <fullName>CDC42 small effector protein 2</fullName>
    </recommendedName>
</protein>
<evidence type="ECO:0000250" key="1"/>
<evidence type="ECO:0000255" key="2">
    <source>
        <dbReference type="PROSITE-ProRule" id="PRU00057"/>
    </source>
</evidence>
<evidence type="ECO:0000305" key="3"/>
<keyword id="KW-1003">Cell membrane</keyword>
<keyword id="KW-0133">Cell shape</keyword>
<keyword id="KW-0963">Cytoplasm</keyword>
<keyword id="KW-0206">Cytoskeleton</keyword>
<keyword id="KW-0449">Lipoprotein</keyword>
<keyword id="KW-0472">Membrane</keyword>
<keyword id="KW-0564">Palmitate</keyword>
<keyword id="KW-1185">Reference proteome</keyword>
<feature type="chain" id="PRO_0000334643" description="CDC42 small effector protein 2">
    <location>
        <begin position="1"/>
        <end position="85"/>
    </location>
</feature>
<feature type="domain" description="CRIB" evidence="2">
    <location>
        <begin position="29"/>
        <end position="42"/>
    </location>
</feature>
<feature type="lipid moiety-binding region" description="S-palmitoyl cysteine" evidence="1">
    <location>
        <position position="10"/>
    </location>
</feature>
<feature type="lipid moiety-binding region" description="S-palmitoyl cysteine" evidence="1">
    <location>
        <position position="11"/>
    </location>
</feature>
<proteinExistence type="inferred from homology"/>
<dbReference type="EMBL" id="BC154538">
    <property type="protein sequence ID" value="AAI54539.1"/>
    <property type="molecule type" value="mRNA"/>
</dbReference>
<dbReference type="RefSeq" id="NP_001153307.1">
    <property type="nucleotide sequence ID" value="NM_001159835.2"/>
</dbReference>
<dbReference type="RefSeq" id="XP_005155605.1">
    <property type="nucleotide sequence ID" value="XM_005155548.5"/>
</dbReference>
<dbReference type="RefSeq" id="XP_009303378.1">
    <property type="nucleotide sequence ID" value="XM_009305103.4"/>
</dbReference>
<dbReference type="FunCoup" id="A9JR56">
    <property type="interactions" value="1460"/>
</dbReference>
<dbReference type="STRING" id="7955.ENSDARP00000123282"/>
<dbReference type="PaxDb" id="7955-ENSDARP00000123282"/>
<dbReference type="Ensembl" id="ENSDART00000142507">
    <property type="protein sequence ID" value="ENSDARP00000123282"/>
    <property type="gene ID" value="ENSDARG00000094577"/>
</dbReference>
<dbReference type="Ensembl" id="ENSDART00000165018">
    <property type="protein sequence ID" value="ENSDARP00000142015"/>
    <property type="gene ID" value="ENSDARG00000094577"/>
</dbReference>
<dbReference type="Ensembl" id="ENSDART00000184155">
    <property type="protein sequence ID" value="ENSDARP00000156580"/>
    <property type="gene ID" value="ENSDARG00000113403"/>
</dbReference>
<dbReference type="GeneID" id="794234"/>
<dbReference type="KEGG" id="dre:794234"/>
<dbReference type="AGR" id="ZFIN:ZDB-GENE-080204-45"/>
<dbReference type="CTD" id="56990"/>
<dbReference type="ZFIN" id="ZDB-GENE-080204-45">
    <property type="gene designation" value="cdc42se2"/>
</dbReference>
<dbReference type="eggNOG" id="ENOG502S22R">
    <property type="taxonomic scope" value="Eukaryota"/>
</dbReference>
<dbReference type="HOGENOM" id="CLU_173417_1_0_1"/>
<dbReference type="InParanoid" id="A9JR56"/>
<dbReference type="OMA" id="CCIGGQP"/>
<dbReference type="OrthoDB" id="5559822at2759"/>
<dbReference type="PhylomeDB" id="A9JR56"/>
<dbReference type="TreeFam" id="TF323815"/>
<dbReference type="PRO" id="PR:A9JR56"/>
<dbReference type="Proteomes" id="UP000000437">
    <property type="component" value="Alternate scaffold 10"/>
</dbReference>
<dbReference type="Proteomes" id="UP000000437">
    <property type="component" value="Chromosome 10"/>
</dbReference>
<dbReference type="Bgee" id="ENSDARG00000094577">
    <property type="expression patterns" value="Expressed in retina and 10 other cell types or tissues"/>
</dbReference>
<dbReference type="GO" id="GO:0005737">
    <property type="term" value="C:cytoplasm"/>
    <property type="evidence" value="ECO:0007669"/>
    <property type="project" value="UniProtKB-KW"/>
</dbReference>
<dbReference type="GO" id="GO:0005856">
    <property type="term" value="C:cytoskeleton"/>
    <property type="evidence" value="ECO:0007669"/>
    <property type="project" value="UniProtKB-SubCell"/>
</dbReference>
<dbReference type="GO" id="GO:0005886">
    <property type="term" value="C:plasma membrane"/>
    <property type="evidence" value="ECO:0000250"/>
    <property type="project" value="UniProtKB"/>
</dbReference>
<dbReference type="GO" id="GO:0031267">
    <property type="term" value="F:small GTPase binding"/>
    <property type="evidence" value="ECO:0007669"/>
    <property type="project" value="InterPro"/>
</dbReference>
<dbReference type="GO" id="GO:0008360">
    <property type="term" value="P:regulation of cell shape"/>
    <property type="evidence" value="ECO:0007669"/>
    <property type="project" value="UniProtKB-KW"/>
</dbReference>
<dbReference type="GO" id="GO:0035023">
    <property type="term" value="P:regulation of Rho protein signal transduction"/>
    <property type="evidence" value="ECO:0007669"/>
    <property type="project" value="InterPro"/>
</dbReference>
<dbReference type="GO" id="GO:0009966">
    <property type="term" value="P:regulation of signal transduction"/>
    <property type="evidence" value="ECO:0000250"/>
    <property type="project" value="UniProtKB"/>
</dbReference>
<dbReference type="CDD" id="cd00132">
    <property type="entry name" value="CRIB"/>
    <property type="match status" value="1"/>
</dbReference>
<dbReference type="FunFam" id="3.90.810.10:FF:000004">
    <property type="entry name" value="CDC42 small effector protein 2"/>
    <property type="match status" value="1"/>
</dbReference>
<dbReference type="Gene3D" id="3.90.810.10">
    <property type="entry name" value="CRIB domain"/>
    <property type="match status" value="1"/>
</dbReference>
<dbReference type="InterPro" id="IPR000095">
    <property type="entry name" value="CRIB_dom"/>
</dbReference>
<dbReference type="InterPro" id="IPR036936">
    <property type="entry name" value="CRIB_dom_sf"/>
</dbReference>
<dbReference type="InterPro" id="IPR039056">
    <property type="entry name" value="SPEC"/>
</dbReference>
<dbReference type="PANTHER" id="PTHR13502:SF4">
    <property type="entry name" value="CDC42 SMALL EFFECTOR PROTEIN 2"/>
    <property type="match status" value="1"/>
</dbReference>
<dbReference type="PANTHER" id="PTHR13502">
    <property type="entry name" value="CDC42 SMALL EFFECTOR PROTEIN HOMOLOG"/>
    <property type="match status" value="1"/>
</dbReference>
<dbReference type="Pfam" id="PF00786">
    <property type="entry name" value="PBD"/>
    <property type="match status" value="1"/>
</dbReference>
<dbReference type="PROSITE" id="PS50108">
    <property type="entry name" value="CRIB"/>
    <property type="match status" value="1"/>
</dbReference>
<gene>
    <name type="primary">cdc42se2</name>
    <name type="ORF">zgc:172116</name>
</gene>
<reference key="1">
    <citation type="submission" date="2007-11" db="EMBL/GenBank/DDBJ databases">
        <authorList>
            <consortium name="NIH - Zebrafish Gene Collection (ZGC) project"/>
        </authorList>
    </citation>
    <scope>NUCLEOTIDE SEQUENCE [LARGE SCALE MRNA]</scope>
</reference>
<accession>A9JR56</accession>
<sequence length="85" mass="9426">MSEFWLCFNCCIAEQPQPKRRRRIDRSMIGEPTNFVHTAHVGSGDLFTGMNSVNSIQNQMQSKGGYGGEAMSVNVQMQLVDTKAG</sequence>
<name>C42S2_DANRE</name>
<comment type="function">
    <text evidence="1">Probably involved in the organization of the actin cytoskeleton by acting downstream of CDC42, inducing actin filament assembly.</text>
</comment>
<comment type="subcellular location">
    <subcellularLocation>
        <location evidence="1">Cytoplasm</location>
        <location evidence="1">Cytoskeleton</location>
    </subcellularLocation>
    <subcellularLocation>
        <location evidence="1">Cell membrane</location>
        <topology evidence="1">Lipid-anchor</topology>
    </subcellularLocation>
</comment>
<comment type="similarity">
    <text evidence="3">Belongs to the CDC42SE/SPEC family.</text>
</comment>